<evidence type="ECO:0000255" key="1">
    <source>
        <dbReference type="HAMAP-Rule" id="MF_01325"/>
    </source>
</evidence>
<evidence type="ECO:0000256" key="2">
    <source>
        <dbReference type="SAM" id="MobiDB-lite"/>
    </source>
</evidence>
<evidence type="ECO:0000305" key="3"/>
<reference key="1">
    <citation type="journal article" date="2004" name="Proc. Natl. Acad. Sci. U.S.A.">
        <title>Structural flexibility in the Burkholderia mallei genome.</title>
        <authorList>
            <person name="Nierman W.C."/>
            <person name="DeShazer D."/>
            <person name="Kim H.S."/>
            <person name="Tettelin H."/>
            <person name="Nelson K.E."/>
            <person name="Feldblyum T.V."/>
            <person name="Ulrich R.L."/>
            <person name="Ronning C.M."/>
            <person name="Brinkac L.M."/>
            <person name="Daugherty S.C."/>
            <person name="Davidsen T.D."/>
            <person name="DeBoy R.T."/>
            <person name="Dimitrov G."/>
            <person name="Dodson R.J."/>
            <person name="Durkin A.S."/>
            <person name="Gwinn M.L."/>
            <person name="Haft D.H."/>
            <person name="Khouri H.M."/>
            <person name="Kolonay J.F."/>
            <person name="Madupu R."/>
            <person name="Mohammoud Y."/>
            <person name="Nelson W.C."/>
            <person name="Radune D."/>
            <person name="Romero C.M."/>
            <person name="Sarria S."/>
            <person name="Selengut J."/>
            <person name="Shamblin C."/>
            <person name="Sullivan S.A."/>
            <person name="White O."/>
            <person name="Yu Y."/>
            <person name="Zafar N."/>
            <person name="Zhou L."/>
            <person name="Fraser C.M."/>
        </authorList>
    </citation>
    <scope>NUCLEOTIDE SEQUENCE [LARGE SCALE GENOMIC DNA]</scope>
    <source>
        <strain>ATCC 23344</strain>
    </source>
</reference>
<organism>
    <name type="scientific">Burkholderia mallei (strain ATCC 23344)</name>
    <dbReference type="NCBI Taxonomy" id="243160"/>
    <lineage>
        <taxon>Bacteria</taxon>
        <taxon>Pseudomonadati</taxon>
        <taxon>Pseudomonadota</taxon>
        <taxon>Betaproteobacteria</taxon>
        <taxon>Burkholderiales</taxon>
        <taxon>Burkholderiaceae</taxon>
        <taxon>Burkholderia</taxon>
        <taxon>pseudomallei group</taxon>
    </lineage>
</organism>
<comment type="function">
    <text evidence="1">One of the primary rRNA binding proteins, it binds directly near the 3'-end of the 23S rRNA, where it nucleates assembly of the 50S subunit.</text>
</comment>
<comment type="subunit">
    <text evidence="1">Part of the 50S ribosomal subunit. Forms a cluster with proteins L14 and L19.</text>
</comment>
<comment type="PTM">
    <text evidence="1">Methylated by PrmB.</text>
</comment>
<comment type="similarity">
    <text evidence="1">Belongs to the universal ribosomal protein uL3 family.</text>
</comment>
<proteinExistence type="inferred from homology"/>
<protein>
    <recommendedName>
        <fullName evidence="1">Large ribosomal subunit protein uL3</fullName>
    </recommendedName>
    <alternativeName>
        <fullName evidence="3">50S ribosomal protein L3</fullName>
    </alternativeName>
</protein>
<keyword id="KW-0488">Methylation</keyword>
<keyword id="KW-1185">Reference proteome</keyword>
<keyword id="KW-0687">Ribonucleoprotein</keyword>
<keyword id="KW-0689">Ribosomal protein</keyword>
<keyword id="KW-0694">RNA-binding</keyword>
<keyword id="KW-0699">rRNA-binding</keyword>
<feature type="chain" id="PRO_0000241325" description="Large ribosomal subunit protein uL3">
    <location>
        <begin position="1"/>
        <end position="219"/>
    </location>
</feature>
<feature type="region of interest" description="Disordered" evidence="2">
    <location>
        <begin position="133"/>
        <end position="153"/>
    </location>
</feature>
<feature type="modified residue" description="N5-methylglutamine" evidence="1">
    <location>
        <position position="153"/>
    </location>
</feature>
<sequence length="219" mass="22967">MSLGLVGRKVGMTRIFTAEGDSIPVTVLDVSDNRVTQIKTVETDGYTAVQVAFGSRRASRVTKPLAGHLAKAGVEAGEILKEFRIEADKAAELSNGAVIGPDLFEVGQKVDVQGVSIGKGYAGTIKRYNFGSGRASHGNSRSHNVPGSIGMAQDPGRVFPGKRMTGHMGDETVTVQNLEIARIDADRKLLLVKGAVPGAKGGKVFVTPAVKTRAVKGAK</sequence>
<dbReference type="EMBL" id="CP000010">
    <property type="protein sequence ID" value="AAU47870.1"/>
    <property type="molecule type" value="Genomic_DNA"/>
</dbReference>
<dbReference type="RefSeq" id="WP_004521904.1">
    <property type="nucleotide sequence ID" value="NC_006348.1"/>
</dbReference>
<dbReference type="RefSeq" id="YP_104166.1">
    <property type="nucleotide sequence ID" value="NC_006348.1"/>
</dbReference>
<dbReference type="SMR" id="Q62GK5"/>
<dbReference type="GeneID" id="93061832"/>
<dbReference type="KEGG" id="bma:BMA2632"/>
<dbReference type="PATRIC" id="fig|243160.12.peg.2703"/>
<dbReference type="eggNOG" id="COG0087">
    <property type="taxonomic scope" value="Bacteria"/>
</dbReference>
<dbReference type="HOGENOM" id="CLU_044142_4_1_4"/>
<dbReference type="Proteomes" id="UP000006693">
    <property type="component" value="Chromosome 1"/>
</dbReference>
<dbReference type="GO" id="GO:0022625">
    <property type="term" value="C:cytosolic large ribosomal subunit"/>
    <property type="evidence" value="ECO:0007669"/>
    <property type="project" value="TreeGrafter"/>
</dbReference>
<dbReference type="GO" id="GO:0019843">
    <property type="term" value="F:rRNA binding"/>
    <property type="evidence" value="ECO:0007669"/>
    <property type="project" value="UniProtKB-UniRule"/>
</dbReference>
<dbReference type="GO" id="GO:0003735">
    <property type="term" value="F:structural constituent of ribosome"/>
    <property type="evidence" value="ECO:0007669"/>
    <property type="project" value="InterPro"/>
</dbReference>
<dbReference type="GO" id="GO:0006412">
    <property type="term" value="P:translation"/>
    <property type="evidence" value="ECO:0007669"/>
    <property type="project" value="UniProtKB-UniRule"/>
</dbReference>
<dbReference type="FunFam" id="2.40.30.10:FF:000004">
    <property type="entry name" value="50S ribosomal protein L3"/>
    <property type="match status" value="1"/>
</dbReference>
<dbReference type="FunFam" id="3.30.160.810:FF:000001">
    <property type="entry name" value="50S ribosomal protein L3"/>
    <property type="match status" value="1"/>
</dbReference>
<dbReference type="Gene3D" id="3.30.160.810">
    <property type="match status" value="1"/>
</dbReference>
<dbReference type="Gene3D" id="2.40.30.10">
    <property type="entry name" value="Translation factors"/>
    <property type="match status" value="1"/>
</dbReference>
<dbReference type="HAMAP" id="MF_01325_B">
    <property type="entry name" value="Ribosomal_uL3_B"/>
    <property type="match status" value="1"/>
</dbReference>
<dbReference type="InterPro" id="IPR000597">
    <property type="entry name" value="Ribosomal_uL3"/>
</dbReference>
<dbReference type="InterPro" id="IPR019927">
    <property type="entry name" value="Ribosomal_uL3_bac/org-type"/>
</dbReference>
<dbReference type="InterPro" id="IPR019926">
    <property type="entry name" value="Ribosomal_uL3_CS"/>
</dbReference>
<dbReference type="InterPro" id="IPR009000">
    <property type="entry name" value="Transl_B-barrel_sf"/>
</dbReference>
<dbReference type="NCBIfam" id="TIGR03625">
    <property type="entry name" value="L3_bact"/>
    <property type="match status" value="1"/>
</dbReference>
<dbReference type="PANTHER" id="PTHR11229">
    <property type="entry name" value="50S RIBOSOMAL PROTEIN L3"/>
    <property type="match status" value="1"/>
</dbReference>
<dbReference type="PANTHER" id="PTHR11229:SF16">
    <property type="entry name" value="LARGE RIBOSOMAL SUBUNIT PROTEIN UL3C"/>
    <property type="match status" value="1"/>
</dbReference>
<dbReference type="Pfam" id="PF00297">
    <property type="entry name" value="Ribosomal_L3"/>
    <property type="match status" value="1"/>
</dbReference>
<dbReference type="SUPFAM" id="SSF50447">
    <property type="entry name" value="Translation proteins"/>
    <property type="match status" value="1"/>
</dbReference>
<dbReference type="PROSITE" id="PS00474">
    <property type="entry name" value="RIBOSOMAL_L3"/>
    <property type="match status" value="1"/>
</dbReference>
<gene>
    <name evidence="1" type="primary">rplC</name>
    <name type="ordered locus">BMA2632</name>
</gene>
<accession>Q62GK5</accession>
<name>RL3_BURMA</name>